<evidence type="ECO:0000250" key="1"/>
<evidence type="ECO:0000255" key="2"/>
<evidence type="ECO:0000305" key="3"/>
<comment type="function">
    <text evidence="1">Catalyzes the production of L-lysyl-tRNA(Lys)transfer and the transfer of a lysyl group from L-lysyl-tRNA(Lys) to membrane-bound phosphatidylglycerol (PG), which produces lysylphosphatidylglycerol (LPG), one of the components of the bacterial membrane with a positive net charge. LPG synthesis contributes to the resistance to cationic antimicrobial peptides (CAMPs) and likely protects M.tuberculosis against the CAMPs produced by competiting microorganisms (bacteriocins). In fact, the modification of anionic phosphatidylglycerol with positively charged L-lysine results in repulsion of the peptides (By similarity).</text>
</comment>
<comment type="catalytic activity">
    <reaction>
        <text>tRNA(Lys) + L-lysine + ATP = L-lysyl-tRNA(Lys) + AMP + diphosphate</text>
        <dbReference type="Rhea" id="RHEA:20792"/>
        <dbReference type="Rhea" id="RHEA-COMP:9696"/>
        <dbReference type="Rhea" id="RHEA-COMP:9697"/>
        <dbReference type="ChEBI" id="CHEBI:30616"/>
        <dbReference type="ChEBI" id="CHEBI:32551"/>
        <dbReference type="ChEBI" id="CHEBI:33019"/>
        <dbReference type="ChEBI" id="CHEBI:78442"/>
        <dbReference type="ChEBI" id="CHEBI:78529"/>
        <dbReference type="ChEBI" id="CHEBI:456215"/>
        <dbReference type="EC" id="6.1.1.6"/>
    </reaction>
</comment>
<comment type="catalytic activity">
    <reaction>
        <text>L-lysyl-tRNA(Lys) + a 1,2-diacyl-sn-glycero-3-phospho-(1'-sn-glycerol) = a 1,2-diacyl-sn-glycero-3-phospho-1'-(3'-O-L-lysyl)-sn-glycerol + tRNA(Lys)</text>
        <dbReference type="Rhea" id="RHEA:10668"/>
        <dbReference type="Rhea" id="RHEA-COMP:9696"/>
        <dbReference type="Rhea" id="RHEA-COMP:9697"/>
        <dbReference type="ChEBI" id="CHEBI:64716"/>
        <dbReference type="ChEBI" id="CHEBI:75792"/>
        <dbReference type="ChEBI" id="CHEBI:78442"/>
        <dbReference type="ChEBI" id="CHEBI:78529"/>
        <dbReference type="EC" id="2.3.2.3"/>
    </reaction>
</comment>
<comment type="cofactor">
    <cofactor evidence="1">
        <name>Mg(2+)</name>
        <dbReference type="ChEBI" id="CHEBI:18420"/>
    </cofactor>
    <text evidence="1">Binds 3 Mg(2+) ions per subunit.</text>
</comment>
<comment type="subcellular location">
    <subcellularLocation>
        <location evidence="3">Cell membrane</location>
        <topology evidence="3">Multi-pass membrane protein</topology>
    </subcellularLocation>
</comment>
<comment type="similarity">
    <text evidence="3">In the N-terminal section; belongs to the LPG synthetase family.</text>
</comment>
<comment type="similarity">
    <text evidence="3">In the C-terminal section; belongs to the class-II aminoacyl-tRNA synthetase family.</text>
</comment>
<comment type="sequence caution" evidence="3">
    <conflict type="erroneous initiation">
        <sequence resource="EMBL-CDS" id="CAC31774"/>
    </conflict>
    <text>Truncated N-terminus.</text>
</comment>
<dbReference type="EC" id="6.1.1.6"/>
<dbReference type="EC" id="2.3.2.3"/>
<dbReference type="EMBL" id="AL583921">
    <property type="protein sequence ID" value="CAC31774.1"/>
    <property type="status" value="ALT_INIT"/>
    <property type="molecule type" value="Genomic_DNA"/>
</dbReference>
<dbReference type="PIR" id="C87083">
    <property type="entry name" value="C87083"/>
</dbReference>
<dbReference type="SMR" id="Q9CC23"/>
<dbReference type="STRING" id="272631.gene:17575232"/>
<dbReference type="KEGG" id="mle:ML1393"/>
<dbReference type="Leproma" id="ML1393"/>
<dbReference type="eggNOG" id="COG1190">
    <property type="taxonomic scope" value="Bacteria"/>
</dbReference>
<dbReference type="eggNOG" id="COG2898">
    <property type="taxonomic scope" value="Bacteria"/>
</dbReference>
<dbReference type="HOGENOM" id="CLU_008255_2_0_11"/>
<dbReference type="Proteomes" id="UP000000806">
    <property type="component" value="Chromosome"/>
</dbReference>
<dbReference type="GO" id="GO:0005829">
    <property type="term" value="C:cytosol"/>
    <property type="evidence" value="ECO:0007669"/>
    <property type="project" value="TreeGrafter"/>
</dbReference>
<dbReference type="GO" id="GO:0005886">
    <property type="term" value="C:plasma membrane"/>
    <property type="evidence" value="ECO:0007669"/>
    <property type="project" value="UniProtKB-SubCell"/>
</dbReference>
<dbReference type="GO" id="GO:0005524">
    <property type="term" value="F:ATP binding"/>
    <property type="evidence" value="ECO:0007669"/>
    <property type="project" value="UniProtKB-UniRule"/>
</dbReference>
<dbReference type="GO" id="GO:0004824">
    <property type="term" value="F:lysine-tRNA ligase activity"/>
    <property type="evidence" value="ECO:0007669"/>
    <property type="project" value="UniProtKB-UniRule"/>
</dbReference>
<dbReference type="GO" id="GO:0000287">
    <property type="term" value="F:magnesium ion binding"/>
    <property type="evidence" value="ECO:0007669"/>
    <property type="project" value="UniProtKB-UniRule"/>
</dbReference>
<dbReference type="GO" id="GO:0050071">
    <property type="term" value="F:phosphatidylglycerol lysyltransferase activity"/>
    <property type="evidence" value="ECO:0007669"/>
    <property type="project" value="UniProtKB-EC"/>
</dbReference>
<dbReference type="GO" id="GO:0000049">
    <property type="term" value="F:tRNA binding"/>
    <property type="evidence" value="ECO:0007669"/>
    <property type="project" value="TreeGrafter"/>
</dbReference>
<dbReference type="GO" id="GO:0006629">
    <property type="term" value="P:lipid metabolic process"/>
    <property type="evidence" value="ECO:0007669"/>
    <property type="project" value="UniProtKB-KW"/>
</dbReference>
<dbReference type="GO" id="GO:0006430">
    <property type="term" value="P:lysyl-tRNA aminoacylation"/>
    <property type="evidence" value="ECO:0007669"/>
    <property type="project" value="UniProtKB-UniRule"/>
</dbReference>
<dbReference type="GO" id="GO:0046677">
    <property type="term" value="P:response to antibiotic"/>
    <property type="evidence" value="ECO:0007669"/>
    <property type="project" value="UniProtKB-KW"/>
</dbReference>
<dbReference type="CDD" id="cd04322">
    <property type="entry name" value="LysRS_N"/>
    <property type="match status" value="1"/>
</dbReference>
<dbReference type="Gene3D" id="3.30.930.10">
    <property type="entry name" value="Bira Bifunctional Protein, Domain 2"/>
    <property type="match status" value="1"/>
</dbReference>
<dbReference type="Gene3D" id="2.40.50.140">
    <property type="entry name" value="Nucleic acid-binding proteins"/>
    <property type="match status" value="1"/>
</dbReference>
<dbReference type="HAMAP" id="MF_00252">
    <property type="entry name" value="Lys_tRNA_synth_class2"/>
    <property type="match status" value="1"/>
</dbReference>
<dbReference type="InterPro" id="IPR004364">
    <property type="entry name" value="Aa-tRNA-synt_II"/>
</dbReference>
<dbReference type="InterPro" id="IPR006195">
    <property type="entry name" value="aa-tRNA-synth_II"/>
</dbReference>
<dbReference type="InterPro" id="IPR045864">
    <property type="entry name" value="aa-tRNA-synth_II/BPL/LPL"/>
</dbReference>
<dbReference type="InterPro" id="IPR024320">
    <property type="entry name" value="LPG_synthase_C"/>
</dbReference>
<dbReference type="InterPro" id="IPR002313">
    <property type="entry name" value="Lys-tRNA-ligase_II"/>
</dbReference>
<dbReference type="InterPro" id="IPR044136">
    <property type="entry name" value="Lys-tRNA-ligase_II_N"/>
</dbReference>
<dbReference type="InterPro" id="IPR018149">
    <property type="entry name" value="Lys-tRNA-synth_II_C"/>
</dbReference>
<dbReference type="InterPro" id="IPR012340">
    <property type="entry name" value="NA-bd_OB-fold"/>
</dbReference>
<dbReference type="InterPro" id="IPR004365">
    <property type="entry name" value="NA-bd_OB_tRNA"/>
</dbReference>
<dbReference type="InterPro" id="IPR031553">
    <property type="entry name" value="tRNA-synt_2_TM"/>
</dbReference>
<dbReference type="NCBIfam" id="TIGR00499">
    <property type="entry name" value="lysS_bact"/>
    <property type="match status" value="1"/>
</dbReference>
<dbReference type="NCBIfam" id="NF001756">
    <property type="entry name" value="PRK00484.1"/>
    <property type="match status" value="1"/>
</dbReference>
<dbReference type="NCBIfam" id="NF002821">
    <property type="entry name" value="PRK02983.1"/>
    <property type="match status" value="1"/>
</dbReference>
<dbReference type="PANTHER" id="PTHR42918:SF15">
    <property type="entry name" value="LYSINE--TRNA LIGASE, CHLOROPLASTIC_MITOCHONDRIAL"/>
    <property type="match status" value="1"/>
</dbReference>
<dbReference type="PANTHER" id="PTHR42918">
    <property type="entry name" value="LYSYL-TRNA SYNTHETASE"/>
    <property type="match status" value="1"/>
</dbReference>
<dbReference type="Pfam" id="PF09924">
    <property type="entry name" value="LPG_synthase_C"/>
    <property type="match status" value="1"/>
</dbReference>
<dbReference type="Pfam" id="PF00152">
    <property type="entry name" value="tRNA-synt_2"/>
    <property type="match status" value="1"/>
</dbReference>
<dbReference type="Pfam" id="PF16995">
    <property type="entry name" value="tRNA-synt_2_TM"/>
    <property type="match status" value="1"/>
</dbReference>
<dbReference type="Pfam" id="PF01336">
    <property type="entry name" value="tRNA_anti-codon"/>
    <property type="match status" value="1"/>
</dbReference>
<dbReference type="PRINTS" id="PR00982">
    <property type="entry name" value="TRNASYNTHLYS"/>
</dbReference>
<dbReference type="SUPFAM" id="SSF55681">
    <property type="entry name" value="Class II aaRS and biotin synthetases"/>
    <property type="match status" value="1"/>
</dbReference>
<dbReference type="SUPFAM" id="SSF50249">
    <property type="entry name" value="Nucleic acid-binding proteins"/>
    <property type="match status" value="1"/>
</dbReference>
<dbReference type="PROSITE" id="PS50862">
    <property type="entry name" value="AA_TRNA_LIGASE_II"/>
    <property type="match status" value="1"/>
</dbReference>
<keyword id="KW-0030">Aminoacyl-tRNA synthetase</keyword>
<keyword id="KW-0046">Antibiotic resistance</keyword>
<keyword id="KW-0067">ATP-binding</keyword>
<keyword id="KW-1003">Cell membrane</keyword>
<keyword id="KW-0436">Ligase</keyword>
<keyword id="KW-0443">Lipid metabolism</keyword>
<keyword id="KW-0460">Magnesium</keyword>
<keyword id="KW-0472">Membrane</keyword>
<keyword id="KW-0479">Metal-binding</keyword>
<keyword id="KW-0511">Multifunctional enzyme</keyword>
<keyword id="KW-0547">Nucleotide-binding</keyword>
<keyword id="KW-1185">Reference proteome</keyword>
<keyword id="KW-0808">Transferase</keyword>
<keyword id="KW-0812">Transmembrane</keyword>
<keyword id="KW-1133">Transmembrane helix</keyword>
<keyword id="KW-0843">Virulence</keyword>
<accession>Q9CC23</accession>
<gene>
    <name type="primary">lysX</name>
    <name type="ordered locus">ML1393</name>
</gene>
<protein>
    <recommendedName>
        <fullName>Lysylphosphatidylglycerol biosynthesis bifunctional protein LysX</fullName>
    </recommendedName>
    <domain>
        <recommendedName>
            <fullName>Lysine--tRNA ligase</fullName>
            <ecNumber>6.1.1.6</ecNumber>
        </recommendedName>
        <alternativeName>
            <fullName>Lysyl-tRNA synthetase</fullName>
            <shortName>LysRS</shortName>
        </alternativeName>
    </domain>
    <domain>
        <recommendedName>
            <fullName>Phosphatidylglycerol lysyltransferase</fullName>
            <ecNumber>2.3.2.3</ecNumber>
        </recommendedName>
        <alternativeName>
            <fullName>Lysylphosphatidylglycerol synthetase</fullName>
            <shortName>LPG synthetase</shortName>
        </alternativeName>
    </domain>
</protein>
<sequence>MTTVDASPGISRFEGISSRSVTVATICSGPCSGSRSHSRYHWVPAAAGWTVGVIATLSLIASVSPLIRWLIRVPREFINNYLFNFPDTSIAWSFVLALLAAALTTRKRIAWLLLLGNMVLAAVLNAVDMAANGNTPAETFGENLGFAVHVVAILLLVLSYREFWAKVRRGALFKAAAVLVAGDVIGILLSLGLVELFPGSLARQDRLPYVANRVVGFALADPDLFSGKPHVLLNAIFGLFGALALIMATIVLFQSQRADNALTGEDESAIRGLLELYGKNDSLGYFATRRDKSVIFAHNGRAAITYRVEIGVCLASGDPVGDPGAWPQAVDAWLELCQTYGWAPGVMGASSQGAQVFRRAGFNAIELGDEAILRTAVYKLSGPDMRGVRQAVTRARRAGLTVRIRRHSDISANEMADTIARADAWRDTEFERGFSMALGRLGDPADSDCLLVEAVDRDDHVVAILSLVPWGTTGVSLDVMRRSPQSPNGTIELMVSELALKGETLGIARISLNFTMFRAAFEQGAQLGAGPIARLWRGLLLFFSRWWQLETLYRSNIKYLPDWVPRYACYEDARLIPRVGVASVIAEGFLVLPFSRRGRVHTGHHPAVPARLAESGLLHHDGSTPDVSGLQTADVDLEVANSRIPEQVRVRLAKLKTLQLNGIDAYPVGHPPSHTVAQALDADDEGTVSISGRILRIRDYGGVLFAHVRDWSGEIQVLLDNLVLECCCIADFTAAIDLGDIVEMTGNMGFSKNGTRSLIVRNWRLIGKCLRPLPNKWKGLTDPEARVRTRYVDLAVNTESRNLIMARSCVLRSVREMLFAKGFVEVETPILQQIHGGATARPFATRINTYDMDLFLRIAPELYLKRLCIGGVERVFELGRAFRNEGVDFSHNPEFTLLEAYQAHADYLMWIDGCRELIQNAAEAANGTQTLMRPRIEGASGTANHLEPIDISGVWPVKTVYEAVSEALGECVDTSTELATLRKLSDAAHIPYWPHWDTGAVVLKLYEHLVENRTDQPTFYIDFPTSVSPLTRPHRSKPGVAERWDLVAWGIELGTAYSELTDPVEQRRRLHEQSLLAVGGNPEAMELDEDFLQAMEYAMPPTGGLGMGIDRLVMLITGRSIRETLPFPLAKPH</sequence>
<reference key="1">
    <citation type="journal article" date="2001" name="Nature">
        <title>Massive gene decay in the leprosy bacillus.</title>
        <authorList>
            <person name="Cole S.T."/>
            <person name="Eiglmeier K."/>
            <person name="Parkhill J."/>
            <person name="James K.D."/>
            <person name="Thomson N.R."/>
            <person name="Wheeler P.R."/>
            <person name="Honore N."/>
            <person name="Garnier T."/>
            <person name="Churcher C.M."/>
            <person name="Harris D.E."/>
            <person name="Mungall K.L."/>
            <person name="Basham D."/>
            <person name="Brown D."/>
            <person name="Chillingworth T."/>
            <person name="Connor R."/>
            <person name="Davies R.M."/>
            <person name="Devlin K."/>
            <person name="Duthoy S."/>
            <person name="Feltwell T."/>
            <person name="Fraser A."/>
            <person name="Hamlin N."/>
            <person name="Holroyd S."/>
            <person name="Hornsby T."/>
            <person name="Jagels K."/>
            <person name="Lacroix C."/>
            <person name="Maclean J."/>
            <person name="Moule S."/>
            <person name="Murphy L.D."/>
            <person name="Oliver K."/>
            <person name="Quail M.A."/>
            <person name="Rajandream M.A."/>
            <person name="Rutherford K.M."/>
            <person name="Rutter S."/>
            <person name="Seeger K."/>
            <person name="Simon S."/>
            <person name="Simmonds M."/>
            <person name="Skelton J."/>
            <person name="Squares R."/>
            <person name="Squares S."/>
            <person name="Stevens K."/>
            <person name="Taylor K."/>
            <person name="Whitehead S."/>
            <person name="Woodward J.R."/>
            <person name="Barrell B.G."/>
        </authorList>
    </citation>
    <scope>NUCLEOTIDE SEQUENCE [LARGE SCALE GENOMIC DNA]</scope>
    <source>
        <strain>TN</strain>
    </source>
</reference>
<proteinExistence type="inferred from homology"/>
<name>LYSX_MYCLE</name>
<organism>
    <name type="scientific">Mycobacterium leprae (strain TN)</name>
    <dbReference type="NCBI Taxonomy" id="272631"/>
    <lineage>
        <taxon>Bacteria</taxon>
        <taxon>Bacillati</taxon>
        <taxon>Actinomycetota</taxon>
        <taxon>Actinomycetes</taxon>
        <taxon>Mycobacteriales</taxon>
        <taxon>Mycobacteriaceae</taxon>
        <taxon>Mycobacterium</taxon>
    </lineage>
</organism>
<feature type="chain" id="PRO_0000394321" description="Lysylphosphatidylglycerol biosynthesis bifunctional protein LysX">
    <location>
        <begin position="1"/>
        <end position="1133"/>
    </location>
</feature>
<feature type="transmembrane region" description="Helical" evidence="2">
    <location>
        <begin position="43"/>
        <end position="63"/>
    </location>
</feature>
<feature type="transmembrane region" description="Helical" evidence="2">
    <location>
        <begin position="82"/>
        <end position="102"/>
    </location>
</feature>
<feature type="transmembrane region" description="Helical" evidence="2">
    <location>
        <begin position="109"/>
        <end position="129"/>
    </location>
</feature>
<feature type="transmembrane region" description="Helical" evidence="2">
    <location>
        <begin position="140"/>
        <end position="160"/>
    </location>
</feature>
<feature type="transmembrane region" description="Helical" evidence="2">
    <location>
        <begin position="177"/>
        <end position="197"/>
    </location>
</feature>
<feature type="transmembrane region" description="Helical" evidence="2">
    <location>
        <begin position="233"/>
        <end position="253"/>
    </location>
</feature>
<feature type="transmembrane region" description="Helical" evidence="2">
    <location>
        <begin position="575"/>
        <end position="595"/>
    </location>
</feature>
<feature type="region of interest" description="Phosphatidylglycerol lysyltransferase">
    <location>
        <begin position="1"/>
        <end position="626"/>
    </location>
</feature>
<feature type="region of interest" description="Lysine--tRNA ligase">
    <location>
        <begin position="627"/>
        <end position="1133"/>
    </location>
</feature>
<feature type="binding site" evidence="1">
    <location>
        <position position="1045"/>
    </location>
    <ligand>
        <name>Mg(2+)</name>
        <dbReference type="ChEBI" id="CHEBI:18420"/>
        <label>1</label>
    </ligand>
</feature>
<feature type="binding site" evidence="1">
    <location>
        <position position="1052"/>
    </location>
    <ligand>
        <name>Mg(2+)</name>
        <dbReference type="ChEBI" id="CHEBI:18420"/>
        <label>1</label>
    </ligand>
</feature>
<feature type="binding site" evidence="1">
    <location>
        <position position="1052"/>
    </location>
    <ligand>
        <name>Mg(2+)</name>
        <dbReference type="ChEBI" id="CHEBI:18420"/>
        <label>2</label>
    </ligand>
</feature>